<accession>A6X3C2</accession>
<gene>
    <name evidence="1" type="primary">hisZ</name>
    <name type="ordered locus">Oant_3018</name>
</gene>
<comment type="function">
    <text evidence="1">Required for the first step of histidine biosynthesis. May allow the feedback regulation of ATP phosphoribosyltransferase activity by histidine.</text>
</comment>
<comment type="pathway">
    <text evidence="1">Amino-acid biosynthesis; L-histidine biosynthesis; L-histidine from 5-phospho-alpha-D-ribose 1-diphosphate: step 1/9.</text>
</comment>
<comment type="subunit">
    <text evidence="1">Heteromultimer composed of HisG and HisZ subunits.</text>
</comment>
<comment type="subcellular location">
    <subcellularLocation>
        <location evidence="1">Cytoplasm</location>
    </subcellularLocation>
</comment>
<comment type="miscellaneous">
    <text>This function is generally fulfilled by the C-terminal part of HisG, which is missing in some bacteria such as this one.</text>
</comment>
<comment type="similarity">
    <text evidence="1">Belongs to the class-II aminoacyl-tRNA synthetase family. HisZ subfamily.</text>
</comment>
<proteinExistence type="inferred from homology"/>
<protein>
    <recommendedName>
        <fullName evidence="1">ATP phosphoribosyltransferase regulatory subunit</fullName>
    </recommendedName>
</protein>
<evidence type="ECO:0000255" key="1">
    <source>
        <dbReference type="HAMAP-Rule" id="MF_00125"/>
    </source>
</evidence>
<name>HISZ_BRUA4</name>
<reference key="1">
    <citation type="journal article" date="2011" name="J. Bacteriol.">
        <title>Genome of Ochrobactrum anthropi ATCC 49188 T, a versatile opportunistic pathogen and symbiont of several eukaryotic hosts.</title>
        <authorList>
            <person name="Chain P.S."/>
            <person name="Lang D.M."/>
            <person name="Comerci D.J."/>
            <person name="Malfatti S.A."/>
            <person name="Vergez L.M."/>
            <person name="Shin M."/>
            <person name="Ugalde R.A."/>
            <person name="Garcia E."/>
            <person name="Tolmasky M.E."/>
        </authorList>
    </citation>
    <scope>NUCLEOTIDE SEQUENCE [LARGE SCALE GENOMIC DNA]</scope>
    <source>
        <strain>ATCC 49188 / DSM 6882 / CCUG 24695 / JCM 21032 / LMG 3331 / NBRC 15819 / NCTC 12168 / Alc 37</strain>
    </source>
</reference>
<sequence>MAGSSSSGVFNSLRATLDMREAELVEIPLIQPADPFLDMAGEDLRRRIFLTENENGDSLCLRPEFTIPVCRNHIALNAATPKRYAYLGEVFRQHRDGAAEFLQAGIEDLGASDEAASDARSIADALSCVRAAAPEAELEIVLGDQSVFAGMLKALGLPQGWRKKLLRSFGDANSMEQVLAELTGAQRRDPLPETLAGLVAEGDESGLARMLEAEMLEAGISPSAGRSPAEIARRLIEKEDLAATRFPASALDLLKQFLETRVTLDSAAVTLRAFASEHALDLAAVLQKFEARSEAIANAGIATKDIIYDASFGRPLDYYTGLVYEIRAPGVEKEGVLAGGGRYDRLLTMLGASENIPGVGFSIWLDRLQMLVGEKK</sequence>
<feature type="chain" id="PRO_1000095464" description="ATP phosphoribosyltransferase regulatory subunit">
    <location>
        <begin position="1"/>
        <end position="376"/>
    </location>
</feature>
<organism>
    <name type="scientific">Brucella anthropi (strain ATCC 49188 / DSM 6882 / CCUG 24695 / JCM 21032 / LMG 3331 / NBRC 15819 / NCTC 12168 / Alc 37)</name>
    <name type="common">Ochrobactrum anthropi</name>
    <dbReference type="NCBI Taxonomy" id="439375"/>
    <lineage>
        <taxon>Bacteria</taxon>
        <taxon>Pseudomonadati</taxon>
        <taxon>Pseudomonadota</taxon>
        <taxon>Alphaproteobacteria</taxon>
        <taxon>Hyphomicrobiales</taxon>
        <taxon>Brucellaceae</taxon>
        <taxon>Brucella/Ochrobactrum group</taxon>
        <taxon>Brucella</taxon>
    </lineage>
</organism>
<keyword id="KW-0028">Amino-acid biosynthesis</keyword>
<keyword id="KW-0963">Cytoplasm</keyword>
<keyword id="KW-0368">Histidine biosynthesis</keyword>
<keyword id="KW-1185">Reference proteome</keyword>
<dbReference type="EMBL" id="CP000759">
    <property type="protein sequence ID" value="ABS15726.1"/>
    <property type="molecule type" value="Genomic_DNA"/>
</dbReference>
<dbReference type="RefSeq" id="WP_011982739.1">
    <property type="nucleotide sequence ID" value="NC_009668.1"/>
</dbReference>
<dbReference type="SMR" id="A6X3C2"/>
<dbReference type="STRING" id="439375.Oant_3018"/>
<dbReference type="KEGG" id="oan:Oant_3018"/>
<dbReference type="PATRIC" id="fig|439375.7.peg.3170"/>
<dbReference type="eggNOG" id="COG3705">
    <property type="taxonomic scope" value="Bacteria"/>
</dbReference>
<dbReference type="HOGENOM" id="CLU_025113_6_0_5"/>
<dbReference type="UniPathway" id="UPA00031">
    <property type="reaction ID" value="UER00006"/>
</dbReference>
<dbReference type="Proteomes" id="UP000002301">
    <property type="component" value="Chromosome 2"/>
</dbReference>
<dbReference type="GO" id="GO:0005737">
    <property type="term" value="C:cytoplasm"/>
    <property type="evidence" value="ECO:0007669"/>
    <property type="project" value="UniProtKB-SubCell"/>
</dbReference>
<dbReference type="GO" id="GO:0004821">
    <property type="term" value="F:histidine-tRNA ligase activity"/>
    <property type="evidence" value="ECO:0007669"/>
    <property type="project" value="TreeGrafter"/>
</dbReference>
<dbReference type="GO" id="GO:0006427">
    <property type="term" value="P:histidyl-tRNA aminoacylation"/>
    <property type="evidence" value="ECO:0007669"/>
    <property type="project" value="TreeGrafter"/>
</dbReference>
<dbReference type="GO" id="GO:0000105">
    <property type="term" value="P:L-histidine biosynthetic process"/>
    <property type="evidence" value="ECO:0007669"/>
    <property type="project" value="UniProtKB-UniRule"/>
</dbReference>
<dbReference type="Gene3D" id="3.30.930.10">
    <property type="entry name" value="Bira Bifunctional Protein, Domain 2"/>
    <property type="match status" value="1"/>
</dbReference>
<dbReference type="HAMAP" id="MF_00125">
    <property type="entry name" value="HisZ"/>
    <property type="match status" value="1"/>
</dbReference>
<dbReference type="InterPro" id="IPR045864">
    <property type="entry name" value="aa-tRNA-synth_II/BPL/LPL"/>
</dbReference>
<dbReference type="InterPro" id="IPR041715">
    <property type="entry name" value="HisRS-like_core"/>
</dbReference>
<dbReference type="InterPro" id="IPR004516">
    <property type="entry name" value="HisRS/HisZ"/>
</dbReference>
<dbReference type="InterPro" id="IPR004517">
    <property type="entry name" value="HisZ"/>
</dbReference>
<dbReference type="NCBIfam" id="NF008948">
    <property type="entry name" value="PRK12295.1-1"/>
    <property type="match status" value="1"/>
</dbReference>
<dbReference type="NCBIfam" id="NF008951">
    <property type="entry name" value="PRK12295.1-4"/>
    <property type="match status" value="1"/>
</dbReference>
<dbReference type="PANTHER" id="PTHR43707:SF1">
    <property type="entry name" value="HISTIDINE--TRNA LIGASE, MITOCHONDRIAL-RELATED"/>
    <property type="match status" value="1"/>
</dbReference>
<dbReference type="PANTHER" id="PTHR43707">
    <property type="entry name" value="HISTIDYL-TRNA SYNTHETASE"/>
    <property type="match status" value="1"/>
</dbReference>
<dbReference type="Pfam" id="PF13393">
    <property type="entry name" value="tRNA-synt_His"/>
    <property type="match status" value="2"/>
</dbReference>
<dbReference type="PIRSF" id="PIRSF001549">
    <property type="entry name" value="His-tRNA_synth"/>
    <property type="match status" value="1"/>
</dbReference>
<dbReference type="SUPFAM" id="SSF55681">
    <property type="entry name" value="Class II aaRS and biotin synthetases"/>
    <property type="match status" value="1"/>
</dbReference>